<proteinExistence type="inferred from homology"/>
<gene>
    <name evidence="1" type="primary">dcd</name>
    <name type="ordered locus">ECSE_2339</name>
</gene>
<comment type="function">
    <text evidence="1">Catalyzes the deamination of dCTP to dUTP.</text>
</comment>
<comment type="catalytic activity">
    <reaction evidence="1">
        <text>dCTP + H2O + H(+) = dUTP + NH4(+)</text>
        <dbReference type="Rhea" id="RHEA:22680"/>
        <dbReference type="ChEBI" id="CHEBI:15377"/>
        <dbReference type="ChEBI" id="CHEBI:15378"/>
        <dbReference type="ChEBI" id="CHEBI:28938"/>
        <dbReference type="ChEBI" id="CHEBI:61481"/>
        <dbReference type="ChEBI" id="CHEBI:61555"/>
        <dbReference type="EC" id="3.5.4.13"/>
    </reaction>
</comment>
<comment type="pathway">
    <text evidence="1">Pyrimidine metabolism; dUMP biosynthesis; dUMP from dCTP (dUTP route): step 1/2.</text>
</comment>
<comment type="subunit">
    <text evidence="1">Homotrimer.</text>
</comment>
<comment type="similarity">
    <text evidence="1">Belongs to the dCTP deaminase family.</text>
</comment>
<organism>
    <name type="scientific">Escherichia coli (strain SE11)</name>
    <dbReference type="NCBI Taxonomy" id="409438"/>
    <lineage>
        <taxon>Bacteria</taxon>
        <taxon>Pseudomonadati</taxon>
        <taxon>Pseudomonadota</taxon>
        <taxon>Gammaproteobacteria</taxon>
        <taxon>Enterobacterales</taxon>
        <taxon>Enterobacteriaceae</taxon>
        <taxon>Escherichia</taxon>
    </lineage>
</organism>
<keyword id="KW-0378">Hydrolase</keyword>
<keyword id="KW-0546">Nucleotide metabolism</keyword>
<keyword id="KW-0547">Nucleotide-binding</keyword>
<accession>B6I8D6</accession>
<sequence>MRLCDRDIEAWLDEGRLSINPRPPVERINGATVDVRLGNKFRTFRGHTAAFIDLSGPKDEVSAALDRVMSDEIVLDEGEAFYLHPGELALAVTLESVTLPADLVGWLDGRSSLARLGLMVHVTAHRIDPGWSGCIVLEFYNSGKLPLALRPGMLIGALSFEPLSGPAARPYNRREDAKYRNQQGAVASRIDKD</sequence>
<dbReference type="EC" id="3.5.4.13" evidence="1"/>
<dbReference type="EMBL" id="AP009240">
    <property type="protein sequence ID" value="BAG77863.1"/>
    <property type="molecule type" value="Genomic_DNA"/>
</dbReference>
<dbReference type="RefSeq" id="WP_001234767.1">
    <property type="nucleotide sequence ID" value="NC_011415.1"/>
</dbReference>
<dbReference type="SMR" id="B6I8D6"/>
<dbReference type="GeneID" id="93775126"/>
<dbReference type="KEGG" id="ecy:ECSE_2339"/>
<dbReference type="HOGENOM" id="CLU_087476_2_0_6"/>
<dbReference type="UniPathway" id="UPA00610">
    <property type="reaction ID" value="UER00665"/>
</dbReference>
<dbReference type="Proteomes" id="UP000008199">
    <property type="component" value="Chromosome"/>
</dbReference>
<dbReference type="GO" id="GO:0008829">
    <property type="term" value="F:dCTP deaminase activity"/>
    <property type="evidence" value="ECO:0007669"/>
    <property type="project" value="UniProtKB-UniRule"/>
</dbReference>
<dbReference type="GO" id="GO:0000166">
    <property type="term" value="F:nucleotide binding"/>
    <property type="evidence" value="ECO:0007669"/>
    <property type="project" value="UniProtKB-KW"/>
</dbReference>
<dbReference type="GO" id="GO:0006226">
    <property type="term" value="P:dUMP biosynthetic process"/>
    <property type="evidence" value="ECO:0007669"/>
    <property type="project" value="UniProtKB-UniPathway"/>
</dbReference>
<dbReference type="GO" id="GO:0006229">
    <property type="term" value="P:dUTP biosynthetic process"/>
    <property type="evidence" value="ECO:0007669"/>
    <property type="project" value="UniProtKB-UniRule"/>
</dbReference>
<dbReference type="GO" id="GO:0015949">
    <property type="term" value="P:nucleobase-containing small molecule interconversion"/>
    <property type="evidence" value="ECO:0007669"/>
    <property type="project" value="TreeGrafter"/>
</dbReference>
<dbReference type="CDD" id="cd07557">
    <property type="entry name" value="trimeric_dUTPase"/>
    <property type="match status" value="1"/>
</dbReference>
<dbReference type="FunFam" id="2.70.40.10:FF:000003">
    <property type="entry name" value="dCTP deaminase"/>
    <property type="match status" value="1"/>
</dbReference>
<dbReference type="Gene3D" id="2.70.40.10">
    <property type="match status" value="1"/>
</dbReference>
<dbReference type="HAMAP" id="MF_00146">
    <property type="entry name" value="dCTP_deaminase"/>
    <property type="match status" value="1"/>
</dbReference>
<dbReference type="InterPro" id="IPR011962">
    <property type="entry name" value="dCTP_deaminase"/>
</dbReference>
<dbReference type="InterPro" id="IPR036157">
    <property type="entry name" value="dUTPase-like_sf"/>
</dbReference>
<dbReference type="InterPro" id="IPR033704">
    <property type="entry name" value="dUTPase_trimeric"/>
</dbReference>
<dbReference type="NCBIfam" id="TIGR02274">
    <property type="entry name" value="dCTP_deam"/>
    <property type="match status" value="1"/>
</dbReference>
<dbReference type="PANTHER" id="PTHR42680">
    <property type="entry name" value="DCTP DEAMINASE"/>
    <property type="match status" value="1"/>
</dbReference>
<dbReference type="PANTHER" id="PTHR42680:SF3">
    <property type="entry name" value="DCTP DEAMINASE"/>
    <property type="match status" value="1"/>
</dbReference>
<dbReference type="Pfam" id="PF22769">
    <property type="entry name" value="DCD"/>
    <property type="match status" value="1"/>
</dbReference>
<dbReference type="SUPFAM" id="SSF51283">
    <property type="entry name" value="dUTPase-like"/>
    <property type="match status" value="1"/>
</dbReference>
<name>DCD_ECOSE</name>
<protein>
    <recommendedName>
        <fullName evidence="1">dCTP deaminase</fullName>
        <ecNumber evidence="1">3.5.4.13</ecNumber>
    </recommendedName>
    <alternativeName>
        <fullName evidence="1">Deoxycytidine triphosphate deaminase</fullName>
    </alternativeName>
</protein>
<feature type="chain" id="PRO_1000096424" description="dCTP deaminase">
    <location>
        <begin position="1"/>
        <end position="193"/>
    </location>
</feature>
<feature type="region of interest" description="Disordered" evidence="2">
    <location>
        <begin position="169"/>
        <end position="193"/>
    </location>
</feature>
<feature type="active site" description="Proton donor/acceptor" evidence="1">
    <location>
        <position position="138"/>
    </location>
</feature>
<feature type="binding site" evidence="1">
    <location>
        <begin position="110"/>
        <end position="115"/>
    </location>
    <ligand>
        <name>dCTP</name>
        <dbReference type="ChEBI" id="CHEBI:61481"/>
    </ligand>
</feature>
<feature type="binding site" evidence="1">
    <location>
        <position position="128"/>
    </location>
    <ligand>
        <name>dCTP</name>
        <dbReference type="ChEBI" id="CHEBI:61481"/>
    </ligand>
</feature>
<feature type="binding site" evidence="1">
    <location>
        <begin position="136"/>
        <end position="138"/>
    </location>
    <ligand>
        <name>dCTP</name>
        <dbReference type="ChEBI" id="CHEBI:61481"/>
    </ligand>
</feature>
<feature type="binding site" evidence="1">
    <location>
        <position position="171"/>
    </location>
    <ligand>
        <name>dCTP</name>
        <dbReference type="ChEBI" id="CHEBI:61481"/>
    </ligand>
</feature>
<feature type="binding site" evidence="1">
    <location>
        <position position="178"/>
    </location>
    <ligand>
        <name>dCTP</name>
        <dbReference type="ChEBI" id="CHEBI:61481"/>
    </ligand>
</feature>
<feature type="binding site" evidence="1">
    <location>
        <position position="182"/>
    </location>
    <ligand>
        <name>dCTP</name>
        <dbReference type="ChEBI" id="CHEBI:61481"/>
    </ligand>
</feature>
<reference key="1">
    <citation type="journal article" date="2008" name="DNA Res.">
        <title>Complete genome sequence and comparative analysis of the wild-type commensal Escherichia coli strain SE11 isolated from a healthy adult.</title>
        <authorList>
            <person name="Oshima K."/>
            <person name="Toh H."/>
            <person name="Ogura Y."/>
            <person name="Sasamoto H."/>
            <person name="Morita H."/>
            <person name="Park S.-H."/>
            <person name="Ooka T."/>
            <person name="Iyoda S."/>
            <person name="Taylor T.D."/>
            <person name="Hayashi T."/>
            <person name="Itoh K."/>
            <person name="Hattori M."/>
        </authorList>
    </citation>
    <scope>NUCLEOTIDE SEQUENCE [LARGE SCALE GENOMIC DNA]</scope>
    <source>
        <strain>SE11</strain>
    </source>
</reference>
<evidence type="ECO:0000255" key="1">
    <source>
        <dbReference type="HAMAP-Rule" id="MF_00146"/>
    </source>
</evidence>
<evidence type="ECO:0000256" key="2">
    <source>
        <dbReference type="SAM" id="MobiDB-lite"/>
    </source>
</evidence>